<keyword id="KW-1003">Cell membrane</keyword>
<keyword id="KW-0472">Membrane</keyword>
<keyword id="KW-0812">Transmembrane</keyword>
<keyword id="KW-1133">Transmembrane helix</keyword>
<proteinExistence type="inferred from homology"/>
<name>Y1556_CLOPS</name>
<accession>Q0SSN5</accession>
<dbReference type="EMBL" id="CP000312">
    <property type="protein sequence ID" value="ABG85969.1"/>
    <property type="molecule type" value="Genomic_DNA"/>
</dbReference>
<dbReference type="RefSeq" id="WP_011592504.1">
    <property type="nucleotide sequence ID" value="NC_008262.1"/>
</dbReference>
<dbReference type="SMR" id="Q0SSN5"/>
<dbReference type="KEGG" id="cpr:CPR_1556"/>
<dbReference type="BioCyc" id="CPER289380:GI76-1568-MONOMER"/>
<dbReference type="Proteomes" id="UP000001824">
    <property type="component" value="Chromosome"/>
</dbReference>
<dbReference type="GO" id="GO:0005886">
    <property type="term" value="C:plasma membrane"/>
    <property type="evidence" value="ECO:0007669"/>
    <property type="project" value="UniProtKB-SubCell"/>
</dbReference>
<dbReference type="Gene3D" id="1.10.1760.20">
    <property type="match status" value="1"/>
</dbReference>
<dbReference type="HAMAP" id="MF_01572">
    <property type="entry name" value="UPF0397"/>
    <property type="match status" value="1"/>
</dbReference>
<dbReference type="InterPro" id="IPR009825">
    <property type="entry name" value="ECF_substrate-spec-like"/>
</dbReference>
<dbReference type="InterPro" id="IPR022914">
    <property type="entry name" value="UPF0397"/>
</dbReference>
<dbReference type="NCBIfam" id="NF010182">
    <property type="entry name" value="PRK13661.1"/>
    <property type="match status" value="1"/>
</dbReference>
<dbReference type="PANTHER" id="PTHR37815">
    <property type="entry name" value="UPF0397 PROTEIN BC_2624-RELATED"/>
    <property type="match status" value="1"/>
</dbReference>
<dbReference type="PANTHER" id="PTHR37815:SF3">
    <property type="entry name" value="UPF0397 PROTEIN SPR0429"/>
    <property type="match status" value="1"/>
</dbReference>
<dbReference type="Pfam" id="PF07155">
    <property type="entry name" value="ECF-ribofla_trS"/>
    <property type="match status" value="1"/>
</dbReference>
<gene>
    <name type="ordered locus">CPR_1556</name>
</gene>
<organism>
    <name type="scientific">Clostridium perfringens (strain SM101 / Type A)</name>
    <dbReference type="NCBI Taxonomy" id="289380"/>
    <lineage>
        <taxon>Bacteria</taxon>
        <taxon>Bacillati</taxon>
        <taxon>Bacillota</taxon>
        <taxon>Clostridia</taxon>
        <taxon>Eubacteriales</taxon>
        <taxon>Clostridiaceae</taxon>
        <taxon>Clostridium</taxon>
    </lineage>
</organism>
<evidence type="ECO:0000255" key="1">
    <source>
        <dbReference type="HAMAP-Rule" id="MF_01572"/>
    </source>
</evidence>
<sequence length="185" mass="20122">MKKNKLSIKTIVAIGIGSAVFMILGRFGSLPTGIPNTNIETAYAFLSLMALLYGPLAGFLIGFIGHALKDIVFFGSPWISWVFASGIVGLIIGFGARFIKINQGVFKLKQIFMFNLIQIIANGVAWFLVAPTLDILIYSEPLNKVYLQGVIGGISNMITVGVLGTVLISNYSKTRIKKGSLRKEY</sequence>
<comment type="subcellular location">
    <subcellularLocation>
        <location evidence="1">Cell membrane</location>
        <topology evidence="1">Multi-pass membrane protein</topology>
    </subcellularLocation>
</comment>
<comment type="similarity">
    <text evidence="1">Belongs to the UPF0397 family.</text>
</comment>
<feature type="chain" id="PRO_0000260791" description="UPF0397 protein CPR_1556">
    <location>
        <begin position="1"/>
        <end position="185"/>
    </location>
</feature>
<feature type="transmembrane region" description="Helical" evidence="1">
    <location>
        <begin position="11"/>
        <end position="31"/>
    </location>
</feature>
<feature type="transmembrane region" description="Helical" evidence="1">
    <location>
        <begin position="44"/>
        <end position="64"/>
    </location>
</feature>
<feature type="transmembrane region" description="Helical" evidence="1">
    <location>
        <begin position="71"/>
        <end position="91"/>
    </location>
</feature>
<feature type="transmembrane region" description="Helical" evidence="1">
    <location>
        <begin position="111"/>
        <end position="131"/>
    </location>
</feature>
<feature type="transmembrane region" description="Helical" evidence="1">
    <location>
        <begin position="149"/>
        <end position="169"/>
    </location>
</feature>
<reference key="1">
    <citation type="journal article" date="2006" name="Genome Res.">
        <title>Skewed genomic variability in strains of the toxigenic bacterial pathogen, Clostridium perfringens.</title>
        <authorList>
            <person name="Myers G.S.A."/>
            <person name="Rasko D.A."/>
            <person name="Cheung J.K."/>
            <person name="Ravel J."/>
            <person name="Seshadri R."/>
            <person name="DeBoy R.T."/>
            <person name="Ren Q."/>
            <person name="Varga J."/>
            <person name="Awad M.M."/>
            <person name="Brinkac L.M."/>
            <person name="Daugherty S.C."/>
            <person name="Haft D.H."/>
            <person name="Dodson R.J."/>
            <person name="Madupu R."/>
            <person name="Nelson W.C."/>
            <person name="Rosovitz M.J."/>
            <person name="Sullivan S.A."/>
            <person name="Khouri H."/>
            <person name="Dimitrov G.I."/>
            <person name="Watkins K.L."/>
            <person name="Mulligan S."/>
            <person name="Benton J."/>
            <person name="Radune D."/>
            <person name="Fisher D.J."/>
            <person name="Atkins H.S."/>
            <person name="Hiscox T."/>
            <person name="Jost B.H."/>
            <person name="Billington S.J."/>
            <person name="Songer J.G."/>
            <person name="McClane B.A."/>
            <person name="Titball R.W."/>
            <person name="Rood J.I."/>
            <person name="Melville S.B."/>
            <person name="Paulsen I.T."/>
        </authorList>
    </citation>
    <scope>NUCLEOTIDE SEQUENCE [LARGE SCALE GENOMIC DNA]</scope>
    <source>
        <strain>SM101 / Type A</strain>
    </source>
</reference>
<protein>
    <recommendedName>
        <fullName evidence="1">UPF0397 protein CPR_1556</fullName>
    </recommendedName>
</protein>